<gene>
    <name evidence="1" type="primary">rpmG</name>
    <name type="ordered locus">CBO3495</name>
    <name type="ordered locus">CLC_3440</name>
</gene>
<accession>A5I7M1</accession>
<accession>A7G8V3</accession>
<reference key="1">
    <citation type="journal article" date="2007" name="Genome Res.">
        <title>Genome sequence of a proteolytic (Group I) Clostridium botulinum strain Hall A and comparative analysis of the clostridial genomes.</title>
        <authorList>
            <person name="Sebaihia M."/>
            <person name="Peck M.W."/>
            <person name="Minton N.P."/>
            <person name="Thomson N.R."/>
            <person name="Holden M.T.G."/>
            <person name="Mitchell W.J."/>
            <person name="Carter A.T."/>
            <person name="Bentley S.D."/>
            <person name="Mason D.R."/>
            <person name="Crossman L."/>
            <person name="Paul C.J."/>
            <person name="Ivens A."/>
            <person name="Wells-Bennik M.H.J."/>
            <person name="Davis I.J."/>
            <person name="Cerdeno-Tarraga A.M."/>
            <person name="Churcher C."/>
            <person name="Quail M.A."/>
            <person name="Chillingworth T."/>
            <person name="Feltwell T."/>
            <person name="Fraser A."/>
            <person name="Goodhead I."/>
            <person name="Hance Z."/>
            <person name="Jagels K."/>
            <person name="Larke N."/>
            <person name="Maddison M."/>
            <person name="Moule S."/>
            <person name="Mungall K."/>
            <person name="Norbertczak H."/>
            <person name="Rabbinowitsch E."/>
            <person name="Sanders M."/>
            <person name="Simmonds M."/>
            <person name="White B."/>
            <person name="Whithead S."/>
            <person name="Parkhill J."/>
        </authorList>
    </citation>
    <scope>NUCLEOTIDE SEQUENCE [LARGE SCALE GENOMIC DNA]</scope>
    <source>
        <strain>Hall / ATCC 3502 / NCTC 13319 / Type A</strain>
    </source>
</reference>
<reference key="2">
    <citation type="journal article" date="2007" name="PLoS ONE">
        <title>Analysis of the neurotoxin complex genes in Clostridium botulinum A1-A4 and B1 strains: BoNT/A3, /Ba4 and /B1 clusters are located within plasmids.</title>
        <authorList>
            <person name="Smith T.J."/>
            <person name="Hill K.K."/>
            <person name="Foley B.T."/>
            <person name="Detter J.C."/>
            <person name="Munk A.C."/>
            <person name="Bruce D.C."/>
            <person name="Doggett N.A."/>
            <person name="Smith L.A."/>
            <person name="Marks J.D."/>
            <person name="Xie G."/>
            <person name="Brettin T.S."/>
        </authorList>
    </citation>
    <scope>NUCLEOTIDE SEQUENCE [LARGE SCALE GENOMIC DNA]</scope>
    <source>
        <strain>Hall / ATCC 3502 / NCTC 13319 / Type A</strain>
    </source>
</reference>
<evidence type="ECO:0000255" key="1">
    <source>
        <dbReference type="HAMAP-Rule" id="MF_00294"/>
    </source>
</evidence>
<evidence type="ECO:0000305" key="2"/>
<name>RL33_CLOBH</name>
<comment type="similarity">
    <text evidence="1">Belongs to the bacterial ribosomal protein bL33 family.</text>
</comment>
<proteinExistence type="inferred from homology"/>
<protein>
    <recommendedName>
        <fullName evidence="1">Large ribosomal subunit protein bL33</fullName>
    </recommendedName>
    <alternativeName>
        <fullName evidence="2">50S ribosomal protein L33</fullName>
    </alternativeName>
</protein>
<keyword id="KW-1185">Reference proteome</keyword>
<keyword id="KW-0687">Ribonucleoprotein</keyword>
<keyword id="KW-0689">Ribosomal protein</keyword>
<dbReference type="EMBL" id="CP000727">
    <property type="protein sequence ID" value="ABS36888.1"/>
    <property type="molecule type" value="Genomic_DNA"/>
</dbReference>
<dbReference type="EMBL" id="AM412317">
    <property type="protein sequence ID" value="CAL85056.1"/>
    <property type="molecule type" value="Genomic_DNA"/>
</dbReference>
<dbReference type="RefSeq" id="WP_003357626.1">
    <property type="nucleotide sequence ID" value="NC_009698.1"/>
</dbReference>
<dbReference type="RefSeq" id="YP_001255977.1">
    <property type="nucleotide sequence ID" value="NC_009495.1"/>
</dbReference>
<dbReference type="RefSeq" id="YP_001389218.1">
    <property type="nucleotide sequence ID" value="NC_009698.1"/>
</dbReference>
<dbReference type="SMR" id="A5I7M1"/>
<dbReference type="GeneID" id="5187732"/>
<dbReference type="KEGG" id="cbh:CLC_3440"/>
<dbReference type="KEGG" id="cbo:CBO3495"/>
<dbReference type="PATRIC" id="fig|413999.7.peg.3472"/>
<dbReference type="HOGENOM" id="CLU_190949_0_2_9"/>
<dbReference type="PRO" id="PR:A5I7M1"/>
<dbReference type="Proteomes" id="UP000001986">
    <property type="component" value="Chromosome"/>
</dbReference>
<dbReference type="GO" id="GO:0005737">
    <property type="term" value="C:cytoplasm"/>
    <property type="evidence" value="ECO:0007669"/>
    <property type="project" value="UniProtKB-ARBA"/>
</dbReference>
<dbReference type="GO" id="GO:1990904">
    <property type="term" value="C:ribonucleoprotein complex"/>
    <property type="evidence" value="ECO:0007669"/>
    <property type="project" value="UniProtKB-KW"/>
</dbReference>
<dbReference type="GO" id="GO:0005840">
    <property type="term" value="C:ribosome"/>
    <property type="evidence" value="ECO:0007669"/>
    <property type="project" value="UniProtKB-KW"/>
</dbReference>
<dbReference type="GO" id="GO:0003735">
    <property type="term" value="F:structural constituent of ribosome"/>
    <property type="evidence" value="ECO:0007669"/>
    <property type="project" value="InterPro"/>
</dbReference>
<dbReference type="GO" id="GO:0006412">
    <property type="term" value="P:translation"/>
    <property type="evidence" value="ECO:0007669"/>
    <property type="project" value="UniProtKB-UniRule"/>
</dbReference>
<dbReference type="Gene3D" id="2.20.28.120">
    <property type="entry name" value="Ribosomal protein L33"/>
    <property type="match status" value="1"/>
</dbReference>
<dbReference type="HAMAP" id="MF_00294">
    <property type="entry name" value="Ribosomal_bL33"/>
    <property type="match status" value="1"/>
</dbReference>
<dbReference type="InterPro" id="IPR001705">
    <property type="entry name" value="Ribosomal_bL33"/>
</dbReference>
<dbReference type="InterPro" id="IPR018264">
    <property type="entry name" value="Ribosomal_bL33_CS"/>
</dbReference>
<dbReference type="InterPro" id="IPR038584">
    <property type="entry name" value="Ribosomal_bL33_sf"/>
</dbReference>
<dbReference type="InterPro" id="IPR011332">
    <property type="entry name" value="Ribosomal_zn-bd"/>
</dbReference>
<dbReference type="NCBIfam" id="NF001764">
    <property type="entry name" value="PRK00504.1"/>
    <property type="match status" value="1"/>
</dbReference>
<dbReference type="NCBIfam" id="NF001860">
    <property type="entry name" value="PRK00595.1"/>
    <property type="match status" value="1"/>
</dbReference>
<dbReference type="NCBIfam" id="TIGR01023">
    <property type="entry name" value="rpmG_bact"/>
    <property type="match status" value="1"/>
</dbReference>
<dbReference type="PANTHER" id="PTHR43168">
    <property type="entry name" value="50S RIBOSOMAL PROTEIN L33, CHLOROPLASTIC"/>
    <property type="match status" value="1"/>
</dbReference>
<dbReference type="PANTHER" id="PTHR43168:SF2">
    <property type="entry name" value="LARGE RIBOSOMAL SUBUNIT PROTEIN BL33C"/>
    <property type="match status" value="1"/>
</dbReference>
<dbReference type="Pfam" id="PF00471">
    <property type="entry name" value="Ribosomal_L33"/>
    <property type="match status" value="1"/>
</dbReference>
<dbReference type="SUPFAM" id="SSF57829">
    <property type="entry name" value="Zn-binding ribosomal proteins"/>
    <property type="match status" value="1"/>
</dbReference>
<dbReference type="PROSITE" id="PS00582">
    <property type="entry name" value="RIBOSOMAL_L33"/>
    <property type="match status" value="1"/>
</dbReference>
<feature type="chain" id="PRO_0000356433" description="Large ribosomal subunit protein bL33">
    <location>
        <begin position="1"/>
        <end position="49"/>
    </location>
</feature>
<organism>
    <name type="scientific">Clostridium botulinum (strain Hall / ATCC 3502 / NCTC 13319 / Type A)</name>
    <dbReference type="NCBI Taxonomy" id="441771"/>
    <lineage>
        <taxon>Bacteria</taxon>
        <taxon>Bacillati</taxon>
        <taxon>Bacillota</taxon>
        <taxon>Clostridia</taxon>
        <taxon>Eubacteriales</taxon>
        <taxon>Clostridiaceae</taxon>
        <taxon>Clostridium</taxon>
    </lineage>
</organism>
<sequence>MRVKVTLACTECKRRNYNTMKNKKNDPDRLEMNKYCPHCHKHAAHKETK</sequence>